<accession>B7V0A0</accession>
<reference key="1">
    <citation type="journal article" date="2009" name="Genome Res.">
        <title>Newly introduced genomic prophage islands are critical determinants of in vivo competitiveness in the Liverpool epidemic strain of Pseudomonas aeruginosa.</title>
        <authorList>
            <person name="Winstanley C."/>
            <person name="Langille M.G.I."/>
            <person name="Fothergill J.L."/>
            <person name="Kukavica-Ibrulj I."/>
            <person name="Paradis-Bleau C."/>
            <person name="Sanschagrin F."/>
            <person name="Thomson N.R."/>
            <person name="Winsor G.L."/>
            <person name="Quail M.A."/>
            <person name="Lennard N."/>
            <person name="Bignell A."/>
            <person name="Clarke L."/>
            <person name="Seeger K."/>
            <person name="Saunders D."/>
            <person name="Harris D."/>
            <person name="Parkhill J."/>
            <person name="Hancock R.E.W."/>
            <person name="Brinkman F.S.L."/>
            <person name="Levesque R.C."/>
        </authorList>
    </citation>
    <scope>NUCLEOTIDE SEQUENCE [LARGE SCALE GENOMIC DNA]</scope>
    <source>
        <strain>LESB58</strain>
    </source>
</reference>
<comment type="function">
    <text evidence="1">Catalyzes the conversion of 1-hydroxy-2-methyl-2-(E)-butenyl 4-diphosphate (HMBPP) into a mixture of isopentenyl diphosphate (IPP) and dimethylallyl diphosphate (DMAPP). Acts in the terminal step of the DOXP/MEP pathway for isoprenoid precursor biosynthesis.</text>
</comment>
<comment type="catalytic activity">
    <reaction evidence="1">
        <text>isopentenyl diphosphate + 2 oxidized [2Fe-2S]-[ferredoxin] + H2O = (2E)-4-hydroxy-3-methylbut-2-enyl diphosphate + 2 reduced [2Fe-2S]-[ferredoxin] + 2 H(+)</text>
        <dbReference type="Rhea" id="RHEA:24488"/>
        <dbReference type="Rhea" id="RHEA-COMP:10000"/>
        <dbReference type="Rhea" id="RHEA-COMP:10001"/>
        <dbReference type="ChEBI" id="CHEBI:15377"/>
        <dbReference type="ChEBI" id="CHEBI:15378"/>
        <dbReference type="ChEBI" id="CHEBI:33737"/>
        <dbReference type="ChEBI" id="CHEBI:33738"/>
        <dbReference type="ChEBI" id="CHEBI:128753"/>
        <dbReference type="ChEBI" id="CHEBI:128769"/>
        <dbReference type="EC" id="1.17.7.4"/>
    </reaction>
</comment>
<comment type="catalytic activity">
    <reaction evidence="1">
        <text>dimethylallyl diphosphate + 2 oxidized [2Fe-2S]-[ferredoxin] + H2O = (2E)-4-hydroxy-3-methylbut-2-enyl diphosphate + 2 reduced [2Fe-2S]-[ferredoxin] + 2 H(+)</text>
        <dbReference type="Rhea" id="RHEA:24825"/>
        <dbReference type="Rhea" id="RHEA-COMP:10000"/>
        <dbReference type="Rhea" id="RHEA-COMP:10001"/>
        <dbReference type="ChEBI" id="CHEBI:15377"/>
        <dbReference type="ChEBI" id="CHEBI:15378"/>
        <dbReference type="ChEBI" id="CHEBI:33737"/>
        <dbReference type="ChEBI" id="CHEBI:33738"/>
        <dbReference type="ChEBI" id="CHEBI:57623"/>
        <dbReference type="ChEBI" id="CHEBI:128753"/>
        <dbReference type="EC" id="1.17.7.4"/>
    </reaction>
</comment>
<comment type="cofactor">
    <cofactor evidence="1">
        <name>[4Fe-4S] cluster</name>
        <dbReference type="ChEBI" id="CHEBI:49883"/>
    </cofactor>
    <text evidence="1">Binds 1 [4Fe-4S] cluster per subunit.</text>
</comment>
<comment type="pathway">
    <text evidence="1">Isoprenoid biosynthesis; dimethylallyl diphosphate biosynthesis; dimethylallyl diphosphate from (2E)-4-hydroxy-3-methylbutenyl diphosphate: step 1/1.</text>
</comment>
<comment type="pathway">
    <text evidence="1">Isoprenoid biosynthesis; isopentenyl diphosphate biosynthesis via DXP pathway; isopentenyl diphosphate from 1-deoxy-D-xylulose 5-phosphate: step 6/6.</text>
</comment>
<comment type="similarity">
    <text evidence="1">Belongs to the IspH family.</text>
</comment>
<evidence type="ECO:0000255" key="1">
    <source>
        <dbReference type="HAMAP-Rule" id="MF_00191"/>
    </source>
</evidence>
<organism>
    <name type="scientific">Pseudomonas aeruginosa (strain LESB58)</name>
    <dbReference type="NCBI Taxonomy" id="557722"/>
    <lineage>
        <taxon>Bacteria</taxon>
        <taxon>Pseudomonadati</taxon>
        <taxon>Pseudomonadota</taxon>
        <taxon>Gammaproteobacteria</taxon>
        <taxon>Pseudomonadales</taxon>
        <taxon>Pseudomonadaceae</taxon>
        <taxon>Pseudomonas</taxon>
    </lineage>
</organism>
<proteinExistence type="inferred from homology"/>
<name>ISPH_PSEA8</name>
<keyword id="KW-0004">4Fe-4S</keyword>
<keyword id="KW-0408">Iron</keyword>
<keyword id="KW-0411">Iron-sulfur</keyword>
<keyword id="KW-0414">Isoprene biosynthesis</keyword>
<keyword id="KW-0479">Metal-binding</keyword>
<keyword id="KW-0560">Oxidoreductase</keyword>
<gene>
    <name evidence="1" type="primary">ispH</name>
    <name type="ordered locus">PLES_49401</name>
</gene>
<sequence length="314" mass="34763">MQIKLANPRGFCAGVDRAIEIVNRALDVFGPPIYVRHEVVHNKFVVDNLRQRGAIFVEELDQVPDNVIVIFSAHGVSQAVRKEAEGRGLKVFDATCPLVTKVHMEVVRYSRDGHECVLIGHEGHPEVEGTMGQYDASNGGAIYLVEDEADVAALEVRKPEALHYVTQTTLSMDDTSKVIDALRAKFPQIQGPRKNDICYATQNRQDAVKELADQCDMVLVVGSPNSSNSNRLRELAERMGTPAYLIDGAEDMQRGWFDGVRRIGITAGASAPEVLVRGVIAQLREWGASEEQELEGREENITFSMPKELRVKAL</sequence>
<dbReference type="EC" id="1.17.7.4" evidence="1"/>
<dbReference type="EMBL" id="FM209186">
    <property type="protein sequence ID" value="CAW29694.1"/>
    <property type="molecule type" value="Genomic_DNA"/>
</dbReference>
<dbReference type="RefSeq" id="WP_003094724.1">
    <property type="nucleotide sequence ID" value="NC_011770.1"/>
</dbReference>
<dbReference type="SMR" id="B7V0A0"/>
<dbReference type="KEGG" id="pag:PLES_49401"/>
<dbReference type="HOGENOM" id="CLU_027486_1_0_6"/>
<dbReference type="UniPathway" id="UPA00056">
    <property type="reaction ID" value="UER00097"/>
</dbReference>
<dbReference type="UniPathway" id="UPA00059">
    <property type="reaction ID" value="UER00105"/>
</dbReference>
<dbReference type="GO" id="GO:0051539">
    <property type="term" value="F:4 iron, 4 sulfur cluster binding"/>
    <property type="evidence" value="ECO:0007669"/>
    <property type="project" value="UniProtKB-UniRule"/>
</dbReference>
<dbReference type="GO" id="GO:0051745">
    <property type="term" value="F:4-hydroxy-3-methylbut-2-enyl diphosphate reductase activity"/>
    <property type="evidence" value="ECO:0007669"/>
    <property type="project" value="UniProtKB-UniRule"/>
</dbReference>
<dbReference type="GO" id="GO:0046872">
    <property type="term" value="F:metal ion binding"/>
    <property type="evidence" value="ECO:0007669"/>
    <property type="project" value="UniProtKB-KW"/>
</dbReference>
<dbReference type="GO" id="GO:0050992">
    <property type="term" value="P:dimethylallyl diphosphate biosynthetic process"/>
    <property type="evidence" value="ECO:0007669"/>
    <property type="project" value="UniProtKB-UniRule"/>
</dbReference>
<dbReference type="GO" id="GO:0019288">
    <property type="term" value="P:isopentenyl diphosphate biosynthetic process, methylerythritol 4-phosphate pathway"/>
    <property type="evidence" value="ECO:0007669"/>
    <property type="project" value="UniProtKB-UniRule"/>
</dbReference>
<dbReference type="GO" id="GO:0016114">
    <property type="term" value="P:terpenoid biosynthetic process"/>
    <property type="evidence" value="ECO:0007669"/>
    <property type="project" value="UniProtKB-UniRule"/>
</dbReference>
<dbReference type="CDD" id="cd13944">
    <property type="entry name" value="lytB_ispH"/>
    <property type="match status" value="1"/>
</dbReference>
<dbReference type="Gene3D" id="3.40.50.11270">
    <property type="match status" value="1"/>
</dbReference>
<dbReference type="Gene3D" id="3.40.1010.20">
    <property type="entry name" value="4-hydroxy-3-methylbut-2-enyl diphosphate reductase, catalytic domain"/>
    <property type="match status" value="2"/>
</dbReference>
<dbReference type="HAMAP" id="MF_00191">
    <property type="entry name" value="IspH"/>
    <property type="match status" value="1"/>
</dbReference>
<dbReference type="InterPro" id="IPR003451">
    <property type="entry name" value="LytB/IspH"/>
</dbReference>
<dbReference type="NCBIfam" id="TIGR00216">
    <property type="entry name" value="ispH_lytB"/>
    <property type="match status" value="1"/>
</dbReference>
<dbReference type="NCBIfam" id="NF002188">
    <property type="entry name" value="PRK01045.1-2"/>
    <property type="match status" value="1"/>
</dbReference>
<dbReference type="NCBIfam" id="NF002190">
    <property type="entry name" value="PRK01045.1-4"/>
    <property type="match status" value="1"/>
</dbReference>
<dbReference type="PANTHER" id="PTHR30426">
    <property type="entry name" value="4-HYDROXY-3-METHYLBUT-2-ENYL DIPHOSPHATE REDUCTASE"/>
    <property type="match status" value="1"/>
</dbReference>
<dbReference type="PANTHER" id="PTHR30426:SF0">
    <property type="entry name" value="4-HYDROXY-3-METHYLBUT-2-ENYL DIPHOSPHATE REDUCTASE"/>
    <property type="match status" value="1"/>
</dbReference>
<dbReference type="Pfam" id="PF02401">
    <property type="entry name" value="LYTB"/>
    <property type="match status" value="1"/>
</dbReference>
<feature type="chain" id="PRO_1000118612" description="4-hydroxy-3-methylbut-2-enyl diphosphate reductase">
    <location>
        <begin position="1"/>
        <end position="314"/>
    </location>
</feature>
<feature type="active site" description="Proton donor" evidence="1">
    <location>
        <position position="126"/>
    </location>
</feature>
<feature type="binding site" evidence="1">
    <location>
        <position position="12"/>
    </location>
    <ligand>
        <name>[4Fe-4S] cluster</name>
        <dbReference type="ChEBI" id="CHEBI:49883"/>
    </ligand>
</feature>
<feature type="binding site" evidence="1">
    <location>
        <position position="41"/>
    </location>
    <ligand>
        <name>(2E)-4-hydroxy-3-methylbut-2-enyl diphosphate</name>
        <dbReference type="ChEBI" id="CHEBI:128753"/>
    </ligand>
</feature>
<feature type="binding site" evidence="1">
    <location>
        <position position="41"/>
    </location>
    <ligand>
        <name>dimethylallyl diphosphate</name>
        <dbReference type="ChEBI" id="CHEBI:57623"/>
    </ligand>
</feature>
<feature type="binding site" evidence="1">
    <location>
        <position position="41"/>
    </location>
    <ligand>
        <name>isopentenyl diphosphate</name>
        <dbReference type="ChEBI" id="CHEBI:128769"/>
    </ligand>
</feature>
<feature type="binding site" evidence="1">
    <location>
        <position position="74"/>
    </location>
    <ligand>
        <name>(2E)-4-hydroxy-3-methylbut-2-enyl diphosphate</name>
        <dbReference type="ChEBI" id="CHEBI:128753"/>
    </ligand>
</feature>
<feature type="binding site" evidence="1">
    <location>
        <position position="74"/>
    </location>
    <ligand>
        <name>dimethylallyl diphosphate</name>
        <dbReference type="ChEBI" id="CHEBI:57623"/>
    </ligand>
</feature>
<feature type="binding site" evidence="1">
    <location>
        <position position="74"/>
    </location>
    <ligand>
        <name>isopentenyl diphosphate</name>
        <dbReference type="ChEBI" id="CHEBI:128769"/>
    </ligand>
</feature>
<feature type="binding site" evidence="1">
    <location>
        <position position="96"/>
    </location>
    <ligand>
        <name>[4Fe-4S] cluster</name>
        <dbReference type="ChEBI" id="CHEBI:49883"/>
    </ligand>
</feature>
<feature type="binding site" evidence="1">
    <location>
        <position position="124"/>
    </location>
    <ligand>
        <name>(2E)-4-hydroxy-3-methylbut-2-enyl diphosphate</name>
        <dbReference type="ChEBI" id="CHEBI:128753"/>
    </ligand>
</feature>
<feature type="binding site" evidence="1">
    <location>
        <position position="124"/>
    </location>
    <ligand>
        <name>dimethylallyl diphosphate</name>
        <dbReference type="ChEBI" id="CHEBI:57623"/>
    </ligand>
</feature>
<feature type="binding site" evidence="1">
    <location>
        <position position="124"/>
    </location>
    <ligand>
        <name>isopentenyl diphosphate</name>
        <dbReference type="ChEBI" id="CHEBI:128769"/>
    </ligand>
</feature>
<feature type="binding site" evidence="1">
    <location>
        <position position="168"/>
    </location>
    <ligand>
        <name>(2E)-4-hydroxy-3-methylbut-2-enyl diphosphate</name>
        <dbReference type="ChEBI" id="CHEBI:128753"/>
    </ligand>
</feature>
<feature type="binding site" evidence="1">
    <location>
        <position position="198"/>
    </location>
    <ligand>
        <name>[4Fe-4S] cluster</name>
        <dbReference type="ChEBI" id="CHEBI:49883"/>
    </ligand>
</feature>
<feature type="binding site" evidence="1">
    <location>
        <position position="226"/>
    </location>
    <ligand>
        <name>(2E)-4-hydroxy-3-methylbut-2-enyl diphosphate</name>
        <dbReference type="ChEBI" id="CHEBI:128753"/>
    </ligand>
</feature>
<feature type="binding site" evidence="1">
    <location>
        <position position="226"/>
    </location>
    <ligand>
        <name>dimethylallyl diphosphate</name>
        <dbReference type="ChEBI" id="CHEBI:57623"/>
    </ligand>
</feature>
<feature type="binding site" evidence="1">
    <location>
        <position position="226"/>
    </location>
    <ligand>
        <name>isopentenyl diphosphate</name>
        <dbReference type="ChEBI" id="CHEBI:128769"/>
    </ligand>
</feature>
<feature type="binding site" evidence="1">
    <location>
        <position position="227"/>
    </location>
    <ligand>
        <name>(2E)-4-hydroxy-3-methylbut-2-enyl diphosphate</name>
        <dbReference type="ChEBI" id="CHEBI:128753"/>
    </ligand>
</feature>
<feature type="binding site" evidence="1">
    <location>
        <position position="227"/>
    </location>
    <ligand>
        <name>dimethylallyl diphosphate</name>
        <dbReference type="ChEBI" id="CHEBI:57623"/>
    </ligand>
</feature>
<feature type="binding site" evidence="1">
    <location>
        <position position="227"/>
    </location>
    <ligand>
        <name>isopentenyl diphosphate</name>
        <dbReference type="ChEBI" id="CHEBI:128769"/>
    </ligand>
</feature>
<feature type="binding site" evidence="1">
    <location>
        <position position="228"/>
    </location>
    <ligand>
        <name>(2E)-4-hydroxy-3-methylbut-2-enyl diphosphate</name>
        <dbReference type="ChEBI" id="CHEBI:128753"/>
    </ligand>
</feature>
<feature type="binding site" evidence="1">
    <location>
        <position position="228"/>
    </location>
    <ligand>
        <name>dimethylallyl diphosphate</name>
        <dbReference type="ChEBI" id="CHEBI:57623"/>
    </ligand>
</feature>
<feature type="binding site" evidence="1">
    <location>
        <position position="228"/>
    </location>
    <ligand>
        <name>isopentenyl diphosphate</name>
        <dbReference type="ChEBI" id="CHEBI:128769"/>
    </ligand>
</feature>
<feature type="binding site" evidence="1">
    <location>
        <position position="270"/>
    </location>
    <ligand>
        <name>(2E)-4-hydroxy-3-methylbut-2-enyl diphosphate</name>
        <dbReference type="ChEBI" id="CHEBI:128753"/>
    </ligand>
</feature>
<feature type="binding site" evidence="1">
    <location>
        <position position="270"/>
    </location>
    <ligand>
        <name>dimethylallyl diphosphate</name>
        <dbReference type="ChEBI" id="CHEBI:57623"/>
    </ligand>
</feature>
<feature type="binding site" evidence="1">
    <location>
        <position position="270"/>
    </location>
    <ligand>
        <name>isopentenyl diphosphate</name>
        <dbReference type="ChEBI" id="CHEBI:128769"/>
    </ligand>
</feature>
<protein>
    <recommendedName>
        <fullName evidence="1">4-hydroxy-3-methylbut-2-enyl diphosphate reductase</fullName>
        <shortName evidence="1">HMBPP reductase</shortName>
        <ecNumber evidence="1">1.17.7.4</ecNumber>
    </recommendedName>
</protein>